<accession>B5EEI3</accession>
<reference key="1">
    <citation type="submission" date="2008-07" db="EMBL/GenBank/DDBJ databases">
        <title>Complete sequence of Geobacter bemidjiensis BEM.</title>
        <authorList>
            <consortium name="US DOE Joint Genome Institute"/>
            <person name="Lucas S."/>
            <person name="Copeland A."/>
            <person name="Lapidus A."/>
            <person name="Glavina del Rio T."/>
            <person name="Dalin E."/>
            <person name="Tice H."/>
            <person name="Bruce D."/>
            <person name="Goodwin L."/>
            <person name="Pitluck S."/>
            <person name="Kiss H."/>
            <person name="Brettin T."/>
            <person name="Detter J.C."/>
            <person name="Han C."/>
            <person name="Kuske C.R."/>
            <person name="Schmutz J."/>
            <person name="Larimer F."/>
            <person name="Land M."/>
            <person name="Hauser L."/>
            <person name="Kyrpides N."/>
            <person name="Lykidis A."/>
            <person name="Lovley D."/>
            <person name="Richardson P."/>
        </authorList>
    </citation>
    <scope>NUCLEOTIDE SEQUENCE [LARGE SCALE GENOMIC DNA]</scope>
    <source>
        <strain>ATCC BAA-1014 / DSM 16622 / JCM 12645 / Bem</strain>
    </source>
</reference>
<dbReference type="EC" id="2.7.7.18" evidence="1"/>
<dbReference type="EMBL" id="CP001124">
    <property type="protein sequence ID" value="ACH40769.1"/>
    <property type="molecule type" value="Genomic_DNA"/>
</dbReference>
<dbReference type="RefSeq" id="WP_012532205.1">
    <property type="nucleotide sequence ID" value="NC_011146.1"/>
</dbReference>
<dbReference type="SMR" id="B5EEI3"/>
<dbReference type="STRING" id="404380.Gbem_3777"/>
<dbReference type="KEGG" id="gbm:Gbem_3777"/>
<dbReference type="eggNOG" id="COG1057">
    <property type="taxonomic scope" value="Bacteria"/>
</dbReference>
<dbReference type="HOGENOM" id="CLU_069765_0_1_7"/>
<dbReference type="OrthoDB" id="5295945at2"/>
<dbReference type="UniPathway" id="UPA00253">
    <property type="reaction ID" value="UER00332"/>
</dbReference>
<dbReference type="Proteomes" id="UP000008825">
    <property type="component" value="Chromosome"/>
</dbReference>
<dbReference type="GO" id="GO:0005524">
    <property type="term" value="F:ATP binding"/>
    <property type="evidence" value="ECO:0007669"/>
    <property type="project" value="UniProtKB-KW"/>
</dbReference>
<dbReference type="GO" id="GO:0004515">
    <property type="term" value="F:nicotinate-nucleotide adenylyltransferase activity"/>
    <property type="evidence" value="ECO:0007669"/>
    <property type="project" value="UniProtKB-UniRule"/>
</dbReference>
<dbReference type="GO" id="GO:0009435">
    <property type="term" value="P:NAD biosynthetic process"/>
    <property type="evidence" value="ECO:0007669"/>
    <property type="project" value="UniProtKB-UniRule"/>
</dbReference>
<dbReference type="CDD" id="cd02165">
    <property type="entry name" value="NMNAT"/>
    <property type="match status" value="1"/>
</dbReference>
<dbReference type="Gene3D" id="3.40.50.620">
    <property type="entry name" value="HUPs"/>
    <property type="match status" value="1"/>
</dbReference>
<dbReference type="HAMAP" id="MF_00244">
    <property type="entry name" value="NaMN_adenylyltr"/>
    <property type="match status" value="1"/>
</dbReference>
<dbReference type="InterPro" id="IPR004821">
    <property type="entry name" value="Cyt_trans-like"/>
</dbReference>
<dbReference type="InterPro" id="IPR005248">
    <property type="entry name" value="NadD/NMNAT"/>
</dbReference>
<dbReference type="InterPro" id="IPR014729">
    <property type="entry name" value="Rossmann-like_a/b/a_fold"/>
</dbReference>
<dbReference type="NCBIfam" id="TIGR00125">
    <property type="entry name" value="cyt_tran_rel"/>
    <property type="match status" value="1"/>
</dbReference>
<dbReference type="NCBIfam" id="TIGR00482">
    <property type="entry name" value="nicotinate (nicotinamide) nucleotide adenylyltransferase"/>
    <property type="match status" value="1"/>
</dbReference>
<dbReference type="NCBIfam" id="NF000840">
    <property type="entry name" value="PRK00071.1-3"/>
    <property type="match status" value="1"/>
</dbReference>
<dbReference type="PANTHER" id="PTHR39321">
    <property type="entry name" value="NICOTINATE-NUCLEOTIDE ADENYLYLTRANSFERASE-RELATED"/>
    <property type="match status" value="1"/>
</dbReference>
<dbReference type="PANTHER" id="PTHR39321:SF3">
    <property type="entry name" value="PHOSPHOPANTETHEINE ADENYLYLTRANSFERASE"/>
    <property type="match status" value="1"/>
</dbReference>
<dbReference type="Pfam" id="PF01467">
    <property type="entry name" value="CTP_transf_like"/>
    <property type="match status" value="1"/>
</dbReference>
<dbReference type="SUPFAM" id="SSF52374">
    <property type="entry name" value="Nucleotidylyl transferase"/>
    <property type="match status" value="1"/>
</dbReference>
<name>NADD_CITBB</name>
<comment type="function">
    <text evidence="1">Catalyzes the reversible adenylation of nicotinate mononucleotide (NaMN) to nicotinic acid adenine dinucleotide (NaAD).</text>
</comment>
<comment type="catalytic activity">
    <reaction evidence="1">
        <text>nicotinate beta-D-ribonucleotide + ATP + H(+) = deamido-NAD(+) + diphosphate</text>
        <dbReference type="Rhea" id="RHEA:22860"/>
        <dbReference type="ChEBI" id="CHEBI:15378"/>
        <dbReference type="ChEBI" id="CHEBI:30616"/>
        <dbReference type="ChEBI" id="CHEBI:33019"/>
        <dbReference type="ChEBI" id="CHEBI:57502"/>
        <dbReference type="ChEBI" id="CHEBI:58437"/>
        <dbReference type="EC" id="2.7.7.18"/>
    </reaction>
</comment>
<comment type="pathway">
    <text evidence="1">Cofactor biosynthesis; NAD(+) biosynthesis; deamido-NAD(+) from nicotinate D-ribonucleotide: step 1/1.</text>
</comment>
<comment type="similarity">
    <text evidence="1">Belongs to the NadD family.</text>
</comment>
<evidence type="ECO:0000255" key="1">
    <source>
        <dbReference type="HAMAP-Rule" id="MF_00244"/>
    </source>
</evidence>
<proteinExistence type="inferred from homology"/>
<protein>
    <recommendedName>
        <fullName evidence="1">Probable nicotinate-nucleotide adenylyltransferase</fullName>
        <ecNumber evidence="1">2.7.7.18</ecNumber>
    </recommendedName>
    <alternativeName>
        <fullName evidence="1">Deamido-NAD(+) diphosphorylase</fullName>
    </alternativeName>
    <alternativeName>
        <fullName evidence="1">Deamido-NAD(+) pyrophosphorylase</fullName>
    </alternativeName>
    <alternativeName>
        <fullName evidence="1">Nicotinate mononucleotide adenylyltransferase</fullName>
        <shortName evidence="1">NaMN adenylyltransferase</shortName>
    </alternativeName>
</protein>
<organism>
    <name type="scientific">Citrifermentans bemidjiense (strain ATCC BAA-1014 / DSM 16622 / JCM 12645 / Bem)</name>
    <name type="common">Geobacter bemidjiensis</name>
    <dbReference type="NCBI Taxonomy" id="404380"/>
    <lineage>
        <taxon>Bacteria</taxon>
        <taxon>Pseudomonadati</taxon>
        <taxon>Thermodesulfobacteriota</taxon>
        <taxon>Desulfuromonadia</taxon>
        <taxon>Geobacterales</taxon>
        <taxon>Geobacteraceae</taxon>
        <taxon>Citrifermentans</taxon>
    </lineage>
</organism>
<gene>
    <name evidence="1" type="primary">nadD</name>
    <name type="ordered locus">Gbem_3777</name>
</gene>
<keyword id="KW-0067">ATP-binding</keyword>
<keyword id="KW-0520">NAD</keyword>
<keyword id="KW-0547">Nucleotide-binding</keyword>
<keyword id="KW-0548">Nucleotidyltransferase</keyword>
<keyword id="KW-0662">Pyridine nucleotide biosynthesis</keyword>
<keyword id="KW-1185">Reference proteome</keyword>
<keyword id="KW-0808">Transferase</keyword>
<sequence>MRLGILGGTFNPIHNAHLRIAEEARDLYQLDRVVFIPAATPPHKPLVGELSFASRLEMVRLAVADNPGFMVSDMEGVRGGRSYSIDTLRELKARYPDDDLFFIVGADSFNDISTWREYEAIFELCNVISVQRPGSTITSLAEALPVAIAGEFCYDPAAKRLNHCSGHAVYALDGVLLDISSSHIRLSVQGGRSIRYLLPDAVEHYIKEQRLYVDAR</sequence>
<feature type="chain" id="PRO_1000100777" description="Probable nicotinate-nucleotide adenylyltransferase">
    <location>
        <begin position="1"/>
        <end position="216"/>
    </location>
</feature>